<evidence type="ECO:0000255" key="1">
    <source>
        <dbReference type="HAMAP-Rule" id="MF_00817"/>
    </source>
</evidence>
<sequence length="279" mass="32094">MNYNDKSLSALKLGQKTEYKSEYDPTLLQPVPRKLNRDGLGITEQQPFDRGADVWTCYELSWLNENGLPQVAIADVAIDFRSENLIESKSFKLYLNSFNQTKFASLEQVEQTLAKDLSQCASGQVSVKVYKLSAYTQQPIVDFAGECIDEQDIQIDSYEFSNEHLASVAEGEVVEETLVSHLLKSNCLITSQPDWGSVQIHYVGKKLNREKLLRYLVSFREHNEFHEQCVERIFTDLIQFTQPEKLTVYARYTRRGGLDINPFRSNFESVPQNLRMARQ</sequence>
<name>QUEF_ACTP7</name>
<keyword id="KW-0963">Cytoplasm</keyword>
<keyword id="KW-0521">NADP</keyword>
<keyword id="KW-0560">Oxidoreductase</keyword>
<keyword id="KW-0671">Queuosine biosynthesis</keyword>
<feature type="chain" id="PRO_1000193210" description="NADPH-dependent 7-cyano-7-deazaguanine reductase">
    <location>
        <begin position="1"/>
        <end position="279"/>
    </location>
</feature>
<feature type="active site" description="Thioimide intermediate" evidence="1">
    <location>
        <position position="187"/>
    </location>
</feature>
<feature type="active site" description="Proton donor" evidence="1">
    <location>
        <position position="194"/>
    </location>
</feature>
<feature type="binding site" evidence="1">
    <location>
        <begin position="86"/>
        <end position="88"/>
    </location>
    <ligand>
        <name>substrate</name>
    </ligand>
</feature>
<feature type="binding site" evidence="1">
    <location>
        <begin position="88"/>
        <end position="89"/>
    </location>
    <ligand>
        <name>NADPH</name>
        <dbReference type="ChEBI" id="CHEBI:57783"/>
    </ligand>
</feature>
<feature type="binding site" evidence="1">
    <location>
        <begin position="226"/>
        <end position="227"/>
    </location>
    <ligand>
        <name>substrate</name>
    </ligand>
</feature>
<feature type="binding site" evidence="1">
    <location>
        <begin position="255"/>
        <end position="256"/>
    </location>
    <ligand>
        <name>NADPH</name>
        <dbReference type="ChEBI" id="CHEBI:57783"/>
    </ligand>
</feature>
<proteinExistence type="inferred from homology"/>
<protein>
    <recommendedName>
        <fullName evidence="1">NADPH-dependent 7-cyano-7-deazaguanine reductase</fullName>
        <ecNumber evidence="1">1.7.1.13</ecNumber>
    </recommendedName>
    <alternativeName>
        <fullName evidence="1">7-cyano-7-carbaguanine reductase</fullName>
    </alternativeName>
    <alternativeName>
        <fullName evidence="1">NADPH-dependent nitrile oxidoreductase</fullName>
    </alternativeName>
    <alternativeName>
        <fullName evidence="1">PreQ(0) reductase</fullName>
    </alternativeName>
</protein>
<dbReference type="EC" id="1.7.1.13" evidence="1"/>
<dbReference type="EMBL" id="CP001091">
    <property type="protein sequence ID" value="ACE61553.1"/>
    <property type="molecule type" value="Genomic_DNA"/>
</dbReference>
<dbReference type="RefSeq" id="WP_005597325.1">
    <property type="nucleotide sequence ID" value="NC_010939.1"/>
</dbReference>
<dbReference type="SMR" id="B3H1I1"/>
<dbReference type="GeneID" id="48599031"/>
<dbReference type="KEGG" id="apa:APP7_0901"/>
<dbReference type="HOGENOM" id="CLU_054738_0_0_6"/>
<dbReference type="UniPathway" id="UPA00392"/>
<dbReference type="Proteomes" id="UP000001226">
    <property type="component" value="Chromosome"/>
</dbReference>
<dbReference type="GO" id="GO:0005737">
    <property type="term" value="C:cytoplasm"/>
    <property type="evidence" value="ECO:0007669"/>
    <property type="project" value="UniProtKB-SubCell"/>
</dbReference>
<dbReference type="GO" id="GO:0033739">
    <property type="term" value="F:preQ1 synthase activity"/>
    <property type="evidence" value="ECO:0007669"/>
    <property type="project" value="UniProtKB-UniRule"/>
</dbReference>
<dbReference type="GO" id="GO:0008616">
    <property type="term" value="P:queuosine biosynthetic process"/>
    <property type="evidence" value="ECO:0007669"/>
    <property type="project" value="UniProtKB-UniRule"/>
</dbReference>
<dbReference type="GO" id="GO:0006400">
    <property type="term" value="P:tRNA modification"/>
    <property type="evidence" value="ECO:0007669"/>
    <property type="project" value="UniProtKB-UniRule"/>
</dbReference>
<dbReference type="Gene3D" id="3.30.1130.10">
    <property type="match status" value="2"/>
</dbReference>
<dbReference type="HAMAP" id="MF_00817">
    <property type="entry name" value="QueF_type2"/>
    <property type="match status" value="1"/>
</dbReference>
<dbReference type="InterPro" id="IPR043133">
    <property type="entry name" value="GTP-CH-I_C/QueF"/>
</dbReference>
<dbReference type="InterPro" id="IPR050084">
    <property type="entry name" value="NADPH_dep_7-cyano-7-deazaG_red"/>
</dbReference>
<dbReference type="InterPro" id="IPR029500">
    <property type="entry name" value="QueF"/>
</dbReference>
<dbReference type="InterPro" id="IPR029139">
    <property type="entry name" value="QueF_N"/>
</dbReference>
<dbReference type="InterPro" id="IPR016428">
    <property type="entry name" value="QueF_type2"/>
</dbReference>
<dbReference type="NCBIfam" id="TIGR03138">
    <property type="entry name" value="QueF"/>
    <property type="match status" value="1"/>
</dbReference>
<dbReference type="PANTHER" id="PTHR34354">
    <property type="entry name" value="NADPH-DEPENDENT 7-CYANO-7-DEAZAGUANINE REDUCTASE"/>
    <property type="match status" value="1"/>
</dbReference>
<dbReference type="PANTHER" id="PTHR34354:SF1">
    <property type="entry name" value="NADPH-DEPENDENT 7-CYANO-7-DEAZAGUANINE REDUCTASE"/>
    <property type="match status" value="1"/>
</dbReference>
<dbReference type="Pfam" id="PF14489">
    <property type="entry name" value="QueF"/>
    <property type="match status" value="1"/>
</dbReference>
<dbReference type="Pfam" id="PF14819">
    <property type="entry name" value="QueF_N"/>
    <property type="match status" value="1"/>
</dbReference>
<dbReference type="PIRSF" id="PIRSF004750">
    <property type="entry name" value="Nitrile_oxidored_YqcD_prd"/>
    <property type="match status" value="1"/>
</dbReference>
<dbReference type="SUPFAM" id="SSF55620">
    <property type="entry name" value="Tetrahydrobiopterin biosynthesis enzymes-like"/>
    <property type="match status" value="1"/>
</dbReference>
<accession>B3H1I1</accession>
<comment type="function">
    <text evidence="1">Catalyzes the NADPH-dependent reduction of 7-cyano-7-deazaguanine (preQ0) to 7-aminomethyl-7-deazaguanine (preQ1).</text>
</comment>
<comment type="catalytic activity">
    <reaction evidence="1">
        <text>7-aminomethyl-7-carbaguanine + 2 NADP(+) = 7-cyano-7-deazaguanine + 2 NADPH + 3 H(+)</text>
        <dbReference type="Rhea" id="RHEA:13409"/>
        <dbReference type="ChEBI" id="CHEBI:15378"/>
        <dbReference type="ChEBI" id="CHEBI:45075"/>
        <dbReference type="ChEBI" id="CHEBI:57783"/>
        <dbReference type="ChEBI" id="CHEBI:58349"/>
        <dbReference type="ChEBI" id="CHEBI:58703"/>
        <dbReference type="EC" id="1.7.1.13"/>
    </reaction>
</comment>
<comment type="pathway">
    <text evidence="1">tRNA modification; tRNA-queuosine biosynthesis.</text>
</comment>
<comment type="subunit">
    <text evidence="1">Homodimer.</text>
</comment>
<comment type="subcellular location">
    <subcellularLocation>
        <location evidence="1">Cytoplasm</location>
    </subcellularLocation>
</comment>
<comment type="similarity">
    <text evidence="1">Belongs to the GTP cyclohydrolase I family. QueF type 2 subfamily.</text>
</comment>
<reference key="1">
    <citation type="submission" date="2008-06" db="EMBL/GenBank/DDBJ databases">
        <title>Genome and proteome analysis of A. pleuropneumoniae serotype 7.</title>
        <authorList>
            <person name="Linke B."/>
            <person name="Buettner F."/>
            <person name="Martinez-Arias R."/>
            <person name="Goesmann A."/>
            <person name="Baltes N."/>
            <person name="Tegetmeyer H."/>
            <person name="Singh M."/>
            <person name="Gerlach G.F."/>
        </authorList>
    </citation>
    <scope>NUCLEOTIDE SEQUENCE [LARGE SCALE GENOMIC DNA]</scope>
    <source>
        <strain>AP76</strain>
    </source>
</reference>
<organism>
    <name type="scientific">Actinobacillus pleuropneumoniae serotype 7 (strain AP76)</name>
    <dbReference type="NCBI Taxonomy" id="537457"/>
    <lineage>
        <taxon>Bacteria</taxon>
        <taxon>Pseudomonadati</taxon>
        <taxon>Pseudomonadota</taxon>
        <taxon>Gammaproteobacteria</taxon>
        <taxon>Pasteurellales</taxon>
        <taxon>Pasteurellaceae</taxon>
        <taxon>Actinobacillus</taxon>
    </lineage>
</organism>
<gene>
    <name evidence="1" type="primary">queF</name>
    <name type="ordered locus">APP7_0901</name>
</gene>